<keyword id="KW-0067">ATP-binding</keyword>
<keyword id="KW-0347">Helicase</keyword>
<keyword id="KW-0378">Hydrolase</keyword>
<keyword id="KW-0547">Nucleotide-binding</keyword>
<keyword id="KW-0946">Virion</keyword>
<gene>
    <name type="ordered locus">Mal-130</name>
    <name type="ORF">j10L</name>
</gene>
<reference key="1">
    <citation type="journal article" date="1993" name="J. Gen. Virol.">
        <title>Three African swine fever virus genes encoding proteins with homology to putative helicases of vaccinia virus.</title>
        <authorList>
            <person name="Baylis S.A."/>
            <person name="Twigg S.R.F."/>
            <person name="Vydelingum S."/>
            <person name="Dixon L.K."/>
            <person name="Smith G.L."/>
        </authorList>
    </citation>
    <scope>NUCLEOTIDE SEQUENCE [GENOMIC DNA]</scope>
</reference>
<reference key="2">
    <citation type="journal article" date="1993" name="Arch. Virol.">
        <title>Three adjacent genes of African swine fever virus with similarity to essential poxvirus genes.</title>
        <authorList>
            <person name="Roberts P.C."/>
            <person name="Lu Z."/>
            <person name="Kutish G.F."/>
            <person name="Rock D.L."/>
        </authorList>
    </citation>
    <scope>NUCLEOTIDE SEQUENCE [GENOMIC DNA]</scope>
</reference>
<reference key="3">
    <citation type="journal article" date="1994" name="J. Gen. Virol.">
        <title>Nucleotide sequence of a 55 kbp region from the right end of the genome of a pathogenic African swine fever virus isolate (Malawi LIL20/1).</title>
        <authorList>
            <person name="Dixon L.K."/>
            <person name="Twigg S.R.F."/>
            <person name="Baylis S.A."/>
            <person name="Vydelingum S."/>
            <person name="Bristow C."/>
            <person name="Hammond J.M."/>
            <person name="Smith G.L."/>
        </authorList>
    </citation>
    <scope>NUCLEOTIDE SEQUENCE [GENOMIC DNA]</scope>
</reference>
<reference key="4">
    <citation type="submission" date="2003-03" db="EMBL/GenBank/DDBJ databases">
        <title>African swine fever virus genomes.</title>
        <authorList>
            <person name="Kutish G.F."/>
            <person name="Rock D.L."/>
        </authorList>
    </citation>
    <scope>NUCLEOTIDE SEQUENCE [LARGE SCALE GENOMIC DNA]</scope>
</reference>
<comment type="function">
    <text evidence="2">Putative DNA-dependent ATPase required for providing the needed energy to achieve the termination of early transcripts.</text>
</comment>
<comment type="subunit">
    <text evidence="3">Part of the viral DNA-directed RNA polymerase that consists of 8 polII-like subunits (RPB1, RPB2, RPB3, RPB5, RPB6, RPB7, RPB9, RPB10), a capping enzyme and a termination factor.</text>
</comment>
<comment type="subcellular location">
    <subcellularLocation>
        <location evidence="3">Virion</location>
    </subcellularLocation>
    <text evidence="3">Found in association with viral nucleoid.</text>
</comment>
<comment type="induction">
    <text evidence="4">Expressed in the late phase of the viral replicative cycle.</text>
</comment>
<comment type="similarity">
    <text evidence="4">Belongs to the DEAD box helicase family. DEAH subfamily.</text>
</comment>
<sequence length="706" mass="80499">MSCVHNNTSFPVQIEAYLKEVFEKYKELQESKDTSLTARFARVLKYYQFLIYSAFSDPKFGIGQGENTRGLLIYHQMGMGKTILSLSLAISLSHIYNPILIAPKSLHSNFQQSLLKLIKLLYPETTDHSKELQKISRRFRFVSLDAYNMGQQIIKAGGSLNGCLLIVDEAHNLFRGIINSANDKTNARQLYNNIMQAKNIRILFLTGTPCSKDPFEMVPCFNMLSGRILLPLHYERFYTAYVNKTTNSPLNADKLLNRLVGMISYAGNQNELNKLFPTELPLIIEKVEMSPEQYRQYLLARDVENAEKHASSGMYEKMNTAALCLPGSEQESGSSYYVRSRMISIFASEMLTVKEDEKLSEAVQQLPKEAFTENSSPKIACMLKNIKTSPGPVLIYSQFVELGLHVVARFLEIEGYQCLQPLKVLEEGHNTILLHKDGKDLMVKNFAEDEPTHTLVLSSKITRFTLITGKILSKERDMIQQLWNSPLNIHGEVIKILLVSKTGAEGLDLKYGRQVHILEPYWDKAREDQVKARIIRIGSHDALPPEEKTVQPFLYIAVANQKMFYSIPEGSQEQKTIDERFHERGLEKSHLNSAFRDLLKRAAIECAFNGESGCLMCQPTNALLFHENFERDLRLPNPCQPLVKTEVKAYSISYEGKQFFYQKNKEVGLGYTFYEYNPIIKAYIEIKPSNPLYIKLIKHVQAGTTV</sequence>
<proteinExistence type="inferred from homology"/>
<organismHost>
    <name type="scientific">Ornithodoros</name>
    <name type="common">relapsing fever ticks</name>
    <dbReference type="NCBI Taxonomy" id="6937"/>
</organismHost>
<organismHost>
    <name type="scientific">Phacochoerus aethiopicus</name>
    <name type="common">Warthog</name>
    <dbReference type="NCBI Taxonomy" id="85517"/>
</organismHost>
<organismHost>
    <name type="scientific">Phacochoerus africanus</name>
    <name type="common">Warthog</name>
    <dbReference type="NCBI Taxonomy" id="41426"/>
</organismHost>
<organismHost>
    <name type="scientific">Potamochoerus larvatus</name>
    <name type="common">Bushpig</name>
    <dbReference type="NCBI Taxonomy" id="273792"/>
</organismHost>
<organismHost>
    <name type="scientific">Sus scrofa</name>
    <name type="common">Pig</name>
    <dbReference type="NCBI Taxonomy" id="9823"/>
</organismHost>
<protein>
    <recommendedName>
        <fullName evidence="3">Termination factor NPH-I homolog</fullName>
        <ecNumber evidence="3">3.6.4.-</ecNumber>
    </recommendedName>
</protein>
<feature type="chain" id="PRO_0000373118" description="Termination factor NPH-I homolog">
    <location>
        <begin position="1"/>
        <end position="706"/>
    </location>
</feature>
<feature type="domain" description="Helicase ATP-binding">
    <location>
        <begin position="62"/>
        <end position="227"/>
    </location>
</feature>
<feature type="domain" description="Helicase C-terminal">
    <location>
        <begin position="417"/>
        <end position="599"/>
    </location>
</feature>
<feature type="short sequence motif" description="DEAH box">
    <location>
        <begin position="168"/>
        <end position="171"/>
    </location>
</feature>
<feature type="binding site" evidence="1">
    <location>
        <begin position="75"/>
        <end position="82"/>
    </location>
    <ligand>
        <name>ATP</name>
        <dbReference type="ChEBI" id="CHEBI:30616"/>
    </ligand>
</feature>
<organism>
    <name type="scientific">African swine fever virus (isolate Tick/Malawi/Lil 20-1/1983)</name>
    <name type="common">ASFV</name>
    <dbReference type="NCBI Taxonomy" id="10500"/>
    <lineage>
        <taxon>Viruses</taxon>
        <taxon>Varidnaviria</taxon>
        <taxon>Bamfordvirae</taxon>
        <taxon>Nucleocytoviricota</taxon>
        <taxon>Pokkesviricetes</taxon>
        <taxon>Asfuvirales</taxon>
        <taxon>Asfarviridae</taxon>
        <taxon>Asfivirus</taxon>
        <taxon>African swine fever virus</taxon>
    </lineage>
</organism>
<name>TFNPH_ASFM2</name>
<accession>Q89926</accession>
<evidence type="ECO:0000250" key="1"/>
<evidence type="ECO:0000250" key="2">
    <source>
        <dbReference type="UniProtKB" id="P05807"/>
    </source>
</evidence>
<evidence type="ECO:0000250" key="3">
    <source>
        <dbReference type="UniProtKB" id="Q89581"/>
    </source>
</evidence>
<evidence type="ECO:0000305" key="4"/>
<dbReference type="EC" id="3.6.4.-" evidence="3"/>
<dbReference type="EMBL" id="X72952">
    <property type="protein sequence ID" value="CAA51457.1"/>
    <property type="molecule type" value="Genomic_DNA"/>
</dbReference>
<dbReference type="EMBL" id="M88275">
    <property type="protein sequence ID" value="AAA03222.1"/>
    <property type="molecule type" value="Genomic_DNA"/>
</dbReference>
<dbReference type="EMBL" id="X71982">
    <property type="protein sequence ID" value="CAA50829.1"/>
    <property type="molecule type" value="Genomic_DNA"/>
</dbReference>
<dbReference type="EMBL" id="AY261361">
    <property type="status" value="NOT_ANNOTATED_CDS"/>
    <property type="molecule type" value="Genomic_DNA"/>
</dbReference>
<dbReference type="PIR" id="JQ2210">
    <property type="entry name" value="JQ2210"/>
</dbReference>
<dbReference type="Proteomes" id="UP000000860">
    <property type="component" value="Segment"/>
</dbReference>
<dbReference type="GO" id="GO:0044423">
    <property type="term" value="C:virion component"/>
    <property type="evidence" value="ECO:0007669"/>
    <property type="project" value="UniProtKB-KW"/>
</dbReference>
<dbReference type="GO" id="GO:0005524">
    <property type="term" value="F:ATP binding"/>
    <property type="evidence" value="ECO:0007669"/>
    <property type="project" value="UniProtKB-KW"/>
</dbReference>
<dbReference type="GO" id="GO:0016787">
    <property type="term" value="F:hydrolase activity"/>
    <property type="evidence" value="ECO:0007669"/>
    <property type="project" value="UniProtKB-KW"/>
</dbReference>
<dbReference type="GO" id="GO:0003724">
    <property type="term" value="F:RNA helicase activity"/>
    <property type="evidence" value="ECO:0007669"/>
    <property type="project" value="UniProtKB-EC"/>
</dbReference>
<dbReference type="GO" id="GO:0006281">
    <property type="term" value="P:DNA repair"/>
    <property type="evidence" value="ECO:0007669"/>
    <property type="project" value="TreeGrafter"/>
</dbReference>
<dbReference type="GO" id="GO:0031297">
    <property type="term" value="P:replication fork processing"/>
    <property type="evidence" value="ECO:0007669"/>
    <property type="project" value="TreeGrafter"/>
</dbReference>
<dbReference type="Gene3D" id="3.40.50.300">
    <property type="entry name" value="P-loop containing nucleotide triphosphate hydrolases"/>
    <property type="match status" value="1"/>
</dbReference>
<dbReference type="Gene3D" id="3.40.50.10810">
    <property type="entry name" value="Tandem AAA-ATPase domain"/>
    <property type="match status" value="1"/>
</dbReference>
<dbReference type="InterPro" id="IPR014001">
    <property type="entry name" value="Helicase_ATP-bd"/>
</dbReference>
<dbReference type="InterPro" id="IPR001650">
    <property type="entry name" value="Helicase_C-like"/>
</dbReference>
<dbReference type="InterPro" id="IPR027417">
    <property type="entry name" value="P-loop_NTPase"/>
</dbReference>
<dbReference type="InterPro" id="IPR038718">
    <property type="entry name" value="SNF2-like_sf"/>
</dbReference>
<dbReference type="InterPro" id="IPR000330">
    <property type="entry name" value="SNF2_N"/>
</dbReference>
<dbReference type="PANTHER" id="PTHR45766">
    <property type="entry name" value="DNA ANNEALING HELICASE AND ENDONUCLEASE ZRANB3 FAMILY MEMBER"/>
    <property type="match status" value="1"/>
</dbReference>
<dbReference type="PANTHER" id="PTHR45766:SF6">
    <property type="entry name" value="SWI_SNF-RELATED MATRIX-ASSOCIATED ACTIN-DEPENDENT REGULATOR OF CHROMATIN SUBFAMILY A-LIKE PROTEIN 1"/>
    <property type="match status" value="1"/>
</dbReference>
<dbReference type="Pfam" id="PF00271">
    <property type="entry name" value="Helicase_C"/>
    <property type="match status" value="1"/>
</dbReference>
<dbReference type="Pfam" id="PF00176">
    <property type="entry name" value="SNF2-rel_dom"/>
    <property type="match status" value="1"/>
</dbReference>
<dbReference type="SMART" id="SM00487">
    <property type="entry name" value="DEXDc"/>
    <property type="match status" value="1"/>
</dbReference>
<dbReference type="SMART" id="SM00490">
    <property type="entry name" value="HELICc"/>
    <property type="match status" value="1"/>
</dbReference>
<dbReference type="SUPFAM" id="SSF52540">
    <property type="entry name" value="P-loop containing nucleoside triphosphate hydrolases"/>
    <property type="match status" value="2"/>
</dbReference>